<name>B3GTC_ARATH</name>
<evidence type="ECO:0000250" key="1"/>
<evidence type="ECO:0000255" key="2"/>
<evidence type="ECO:0000256" key="3">
    <source>
        <dbReference type="SAM" id="MobiDB-lite"/>
    </source>
</evidence>
<evidence type="ECO:0000305" key="4"/>
<protein>
    <recommendedName>
        <fullName>Probable beta-1,3-galactosyltransferase 12</fullName>
        <ecNumber>2.4.1.-</ecNumber>
    </recommendedName>
</protein>
<sequence>MPLFSHRFTTASSSSPASPSYYNKPSSKTHKPNSSSSSYTSSRIHVAIIFFSLVSVFIGVAGTIFALSSTGPASVYRCGGSKDTSRVVSASRKLGGDGGNNGVVVERRKLLGFVGIQTGFDSGDRRTALRSTWFPSDPDSLLRLEQATGLAFRFVIGKSKDAKKMAELEKEIKEYRDFVLLDTEEEYIRLPYKTLAFFKAAFKLFEADYYVKADDDIYLRPDRLATLLANERLHSQTYIGCMKKGPVITDPKLKWYEKQGNLIGNEYFLHAYGPIYVLSAEIVASLAAARNGSLRMFNNEDVTIGSWMLAMDVHHEDNRALCDPHCSPKSIAVWDIPKCSGLCDPESRLKELHKTDMCSKSPTLPPDDIDQ</sequence>
<feature type="chain" id="PRO_0000359422" description="Probable beta-1,3-galactosyltransferase 12">
    <location>
        <begin position="1"/>
        <end position="371"/>
    </location>
</feature>
<feature type="transmembrane region" description="Helical; Signal-anchor for type II membrane protein" evidence="2">
    <location>
        <begin position="46"/>
        <end position="66"/>
    </location>
</feature>
<feature type="region of interest" description="Disordered" evidence="3">
    <location>
        <begin position="1"/>
        <end position="36"/>
    </location>
</feature>
<feature type="compositionally biased region" description="Low complexity" evidence="3">
    <location>
        <begin position="11"/>
        <end position="36"/>
    </location>
</feature>
<feature type="glycosylation site" description="N-linked (GlcNAc...) asparagine" evidence="2">
    <location>
        <position position="291"/>
    </location>
</feature>
<dbReference type="EC" id="2.4.1.-"/>
<dbReference type="EMBL" id="AC004747">
    <property type="protein sequence ID" value="AAC31227.1"/>
    <property type="status" value="ALT_SEQ"/>
    <property type="molecule type" value="Genomic_DNA"/>
</dbReference>
<dbReference type="EMBL" id="CP002685">
    <property type="protein sequence ID" value="AEC07794.1"/>
    <property type="molecule type" value="Genomic_DNA"/>
</dbReference>
<dbReference type="EMBL" id="BT015330">
    <property type="protein sequence ID" value="AAU05453.1"/>
    <property type="molecule type" value="mRNA"/>
</dbReference>
<dbReference type="EMBL" id="BT015706">
    <property type="protein sequence ID" value="AAU45204.1"/>
    <property type="molecule type" value="mRNA"/>
</dbReference>
<dbReference type="PIR" id="T02614">
    <property type="entry name" value="T02614"/>
</dbReference>
<dbReference type="RefSeq" id="NP_180179.2">
    <property type="nucleotide sequence ID" value="NM_128168.5"/>
</dbReference>
<dbReference type="SMR" id="Q66GS2"/>
<dbReference type="FunCoup" id="Q66GS2">
    <property type="interactions" value="2359"/>
</dbReference>
<dbReference type="STRING" id="3702.Q66GS2"/>
<dbReference type="CAZy" id="GT31">
    <property type="family name" value="Glycosyltransferase Family 31"/>
</dbReference>
<dbReference type="GlyCosmos" id="Q66GS2">
    <property type="glycosylation" value="1 site, No reported glycans"/>
</dbReference>
<dbReference type="GlyGen" id="Q66GS2">
    <property type="glycosylation" value="1 site"/>
</dbReference>
<dbReference type="PaxDb" id="3702-AT2G26100.1"/>
<dbReference type="ProteomicsDB" id="240960"/>
<dbReference type="EnsemblPlants" id="AT2G26100.1">
    <property type="protein sequence ID" value="AT2G26100.1"/>
    <property type="gene ID" value="AT2G26100"/>
</dbReference>
<dbReference type="GeneID" id="817150"/>
<dbReference type="Gramene" id="AT2G26100.1">
    <property type="protein sequence ID" value="AT2G26100.1"/>
    <property type="gene ID" value="AT2G26100"/>
</dbReference>
<dbReference type="KEGG" id="ath:AT2G26100"/>
<dbReference type="Araport" id="AT2G26100"/>
<dbReference type="TAIR" id="AT2G26100"/>
<dbReference type="eggNOG" id="KOG2288">
    <property type="taxonomic scope" value="Eukaryota"/>
</dbReference>
<dbReference type="HOGENOM" id="CLU_040730_0_0_1"/>
<dbReference type="InParanoid" id="Q66GS2"/>
<dbReference type="OMA" id="EKYNDFM"/>
<dbReference type="PhylomeDB" id="Q66GS2"/>
<dbReference type="UniPathway" id="UPA00378"/>
<dbReference type="PRO" id="PR:Q66GS2"/>
<dbReference type="Proteomes" id="UP000006548">
    <property type="component" value="Chromosome 2"/>
</dbReference>
<dbReference type="ExpressionAtlas" id="Q66GS2">
    <property type="expression patterns" value="baseline and differential"/>
</dbReference>
<dbReference type="GO" id="GO:0005794">
    <property type="term" value="C:Golgi apparatus"/>
    <property type="evidence" value="ECO:0007005"/>
    <property type="project" value="TAIR"/>
</dbReference>
<dbReference type="GO" id="GO:0000139">
    <property type="term" value="C:Golgi membrane"/>
    <property type="evidence" value="ECO:0007669"/>
    <property type="project" value="UniProtKB-SubCell"/>
</dbReference>
<dbReference type="GO" id="GO:0016758">
    <property type="term" value="F:hexosyltransferase activity"/>
    <property type="evidence" value="ECO:0007669"/>
    <property type="project" value="InterPro"/>
</dbReference>
<dbReference type="GO" id="GO:0006486">
    <property type="term" value="P:protein glycosylation"/>
    <property type="evidence" value="ECO:0007669"/>
    <property type="project" value="UniProtKB-UniPathway"/>
</dbReference>
<dbReference type="FunFam" id="3.90.550.50:FF:000012">
    <property type="entry name" value="Hexosyltransferase"/>
    <property type="match status" value="1"/>
</dbReference>
<dbReference type="Gene3D" id="3.90.550.50">
    <property type="match status" value="1"/>
</dbReference>
<dbReference type="InterPro" id="IPR002659">
    <property type="entry name" value="Glyco_trans_31"/>
</dbReference>
<dbReference type="PANTHER" id="PTHR11214:SF85">
    <property type="entry name" value="BETA-1,3-GALACTOSYLTRANSFERASE 12-RELATED"/>
    <property type="match status" value="1"/>
</dbReference>
<dbReference type="PANTHER" id="PTHR11214">
    <property type="entry name" value="BETA-1,3-N-ACETYLGLUCOSAMINYLTRANSFERASE"/>
    <property type="match status" value="1"/>
</dbReference>
<dbReference type="Pfam" id="PF01762">
    <property type="entry name" value="Galactosyl_T"/>
    <property type="match status" value="1"/>
</dbReference>
<organism>
    <name type="scientific">Arabidopsis thaliana</name>
    <name type="common">Mouse-ear cress</name>
    <dbReference type="NCBI Taxonomy" id="3702"/>
    <lineage>
        <taxon>Eukaryota</taxon>
        <taxon>Viridiplantae</taxon>
        <taxon>Streptophyta</taxon>
        <taxon>Embryophyta</taxon>
        <taxon>Tracheophyta</taxon>
        <taxon>Spermatophyta</taxon>
        <taxon>Magnoliopsida</taxon>
        <taxon>eudicotyledons</taxon>
        <taxon>Gunneridae</taxon>
        <taxon>Pentapetalae</taxon>
        <taxon>rosids</taxon>
        <taxon>malvids</taxon>
        <taxon>Brassicales</taxon>
        <taxon>Brassicaceae</taxon>
        <taxon>Camelineae</taxon>
        <taxon>Arabidopsis</taxon>
    </lineage>
</organism>
<comment type="function">
    <text evidence="1">Beta-1,3-galactosyltransferase that transfers galactose from UDP-galactose to substrates with a terminal glycosyl residue.</text>
</comment>
<comment type="cofactor">
    <cofactor evidence="1">
        <name>Mn(2+)</name>
        <dbReference type="ChEBI" id="CHEBI:29035"/>
    </cofactor>
</comment>
<comment type="pathway">
    <text>Protein modification; protein glycosylation.</text>
</comment>
<comment type="subcellular location">
    <subcellularLocation>
        <location evidence="4">Golgi apparatus membrane</location>
        <topology evidence="4">Single-pass type II membrane protein</topology>
    </subcellularLocation>
</comment>
<comment type="similarity">
    <text evidence="4">Belongs to the glycosyltransferase 31 family.</text>
</comment>
<comment type="sequence caution" evidence="4">
    <conflict type="erroneous gene model prediction">
        <sequence resource="EMBL-CDS" id="AAC31227"/>
    </conflict>
</comment>
<proteinExistence type="evidence at transcript level"/>
<reference key="1">
    <citation type="journal article" date="1999" name="Nature">
        <title>Sequence and analysis of chromosome 2 of the plant Arabidopsis thaliana.</title>
        <authorList>
            <person name="Lin X."/>
            <person name="Kaul S."/>
            <person name="Rounsley S.D."/>
            <person name="Shea T.P."/>
            <person name="Benito M.-I."/>
            <person name="Town C.D."/>
            <person name="Fujii C.Y."/>
            <person name="Mason T.M."/>
            <person name="Bowman C.L."/>
            <person name="Barnstead M.E."/>
            <person name="Feldblyum T.V."/>
            <person name="Buell C.R."/>
            <person name="Ketchum K.A."/>
            <person name="Lee J.J."/>
            <person name="Ronning C.M."/>
            <person name="Koo H.L."/>
            <person name="Moffat K.S."/>
            <person name="Cronin L.A."/>
            <person name="Shen M."/>
            <person name="Pai G."/>
            <person name="Van Aken S."/>
            <person name="Umayam L."/>
            <person name="Tallon L.J."/>
            <person name="Gill J.E."/>
            <person name="Adams M.D."/>
            <person name="Carrera A.J."/>
            <person name="Creasy T.H."/>
            <person name="Goodman H.M."/>
            <person name="Somerville C.R."/>
            <person name="Copenhaver G.P."/>
            <person name="Preuss D."/>
            <person name="Nierman W.C."/>
            <person name="White O."/>
            <person name="Eisen J.A."/>
            <person name="Salzberg S.L."/>
            <person name="Fraser C.M."/>
            <person name="Venter J.C."/>
        </authorList>
    </citation>
    <scope>NUCLEOTIDE SEQUENCE [LARGE SCALE GENOMIC DNA]</scope>
    <source>
        <strain>cv. Columbia</strain>
    </source>
</reference>
<reference key="2">
    <citation type="journal article" date="2017" name="Plant J.">
        <title>Araport11: a complete reannotation of the Arabidopsis thaliana reference genome.</title>
        <authorList>
            <person name="Cheng C.Y."/>
            <person name="Krishnakumar V."/>
            <person name="Chan A.P."/>
            <person name="Thibaud-Nissen F."/>
            <person name="Schobel S."/>
            <person name="Town C.D."/>
        </authorList>
    </citation>
    <scope>GENOME REANNOTATION</scope>
    <source>
        <strain>cv. Columbia</strain>
    </source>
</reference>
<reference key="3">
    <citation type="submission" date="2004-09" db="EMBL/GenBank/DDBJ databases">
        <title>Arabidopsis ORF clones.</title>
        <authorList>
            <person name="Kim C.J."/>
            <person name="Chen H."/>
            <person name="Cheuk R.F."/>
            <person name="Shinn P."/>
            <person name="Ecker J.R."/>
        </authorList>
    </citation>
    <scope>NUCLEOTIDE SEQUENCE [LARGE SCALE MRNA]</scope>
    <source>
        <strain>cv. Columbia</strain>
    </source>
</reference>
<reference key="4">
    <citation type="journal article" date="2008" name="Plant Mol. Biol.">
        <title>Identification of a novel group of putative Arabidopsis thaliana beta-(1,3)-galactosyltransferases.</title>
        <authorList>
            <person name="Qu Y."/>
            <person name="Egelund J."/>
            <person name="Gilson P.R."/>
            <person name="Houghton F."/>
            <person name="Gleeson P.A."/>
            <person name="Schultz C.J."/>
            <person name="Bacic A."/>
        </authorList>
    </citation>
    <scope>GENE FAMILY</scope>
    <scope>NOMENCLATURE</scope>
</reference>
<gene>
    <name type="primary">B3GALT12</name>
    <name type="ordered locus">At2g26100</name>
    <name type="ORF">T19L18.9</name>
</gene>
<accession>Q66GS2</accession>
<accession>O80987</accession>
<keyword id="KW-0325">Glycoprotein</keyword>
<keyword id="KW-0328">Glycosyltransferase</keyword>
<keyword id="KW-0333">Golgi apparatus</keyword>
<keyword id="KW-0464">Manganese</keyword>
<keyword id="KW-0472">Membrane</keyword>
<keyword id="KW-1185">Reference proteome</keyword>
<keyword id="KW-0735">Signal-anchor</keyword>
<keyword id="KW-0808">Transferase</keyword>
<keyword id="KW-0812">Transmembrane</keyword>
<keyword id="KW-1133">Transmembrane helix</keyword>